<sequence length="68" mass="7741">MDQVMQFVEPSRQFVKDSIRLVKRCTKPDRKEFQKIAMATAIGFAIMGFIGFFVKLIHIPINNIIVGG</sequence>
<evidence type="ECO:0000250" key="1">
    <source>
        <dbReference type="UniProtKB" id="P60059"/>
    </source>
</evidence>
<evidence type="ECO:0000250" key="2">
    <source>
        <dbReference type="UniProtKB" id="P61619"/>
    </source>
</evidence>
<evidence type="ECO:0000269" key="3">
    <source>
    </source>
</evidence>
<evidence type="ECO:0000269" key="4">
    <source>
    </source>
</evidence>
<evidence type="ECO:0000305" key="5"/>
<evidence type="ECO:0007744" key="6">
    <source>
        <dbReference type="PDB" id="7TM3"/>
    </source>
</evidence>
<evidence type="ECO:0007744" key="7">
    <source>
        <dbReference type="PDB" id="7TUT"/>
    </source>
</evidence>
<evidence type="ECO:0007829" key="8">
    <source>
        <dbReference type="PDB" id="6Z3T"/>
    </source>
</evidence>
<name>SC61G_CANLF</name>
<comment type="function">
    <text evidence="2 3 4">Component of SEC61 channel-forming translocon complex that mediates transport of signal peptide-containing precursor polypeptides across the endoplasmic reticulum (ER) (PubMed:8107851). Forms a ribosome receptor and a gated pore in the ER membrane, both functions required for cotranslational translocation of nascent polypeptides (PubMed:8107851). The SEC61 channel is also involved in ER membrane insertion of transmembrane proteins: it mediates membrane insertion of the first few transmembrane segments of proteins, while insertion of subsequent transmembrane regions of multi-pass membrane proteins is mediated by the multi-pass translocon (MPT) complex (PubMed:36261528). The SEC61 channel cooperates with the translocating protein TRAM1 to import nascent proteins into the ER (By similarity).</text>
</comment>
<comment type="subunit">
    <text evidence="3 4">The SEC61 channel-forming translocon complex consists of channel-forming core components SEC61A1, SEC61B and SEC61G and different auxiliary components such as SEC62 and SEC63 (PubMed:36261528, PubMed:8107851). The SEC61 channel associates with the multi-pass translocon (MPT) complex (PubMed:36261528).</text>
</comment>
<comment type="subcellular location">
    <subcellularLocation>
        <location evidence="3 4">Endoplasmic reticulum membrane</location>
        <topology evidence="3">Single-pass membrane protein</topology>
    </subcellularLocation>
</comment>
<comment type="similarity">
    <text evidence="5">Belongs to the SecE/SEC61-gamma family.</text>
</comment>
<protein>
    <recommendedName>
        <fullName>Protein transport protein Sec61 subunit gamma</fullName>
    </recommendedName>
</protein>
<organism>
    <name type="scientific">Canis lupus familiaris</name>
    <name type="common">Dog</name>
    <name type="synonym">Canis familiaris</name>
    <dbReference type="NCBI Taxonomy" id="9615"/>
    <lineage>
        <taxon>Eukaryota</taxon>
        <taxon>Metazoa</taxon>
        <taxon>Chordata</taxon>
        <taxon>Craniata</taxon>
        <taxon>Vertebrata</taxon>
        <taxon>Euteleostomi</taxon>
        <taxon>Mammalia</taxon>
        <taxon>Eutheria</taxon>
        <taxon>Laurasiatheria</taxon>
        <taxon>Carnivora</taxon>
        <taxon>Caniformia</taxon>
        <taxon>Canidae</taxon>
        <taxon>Canis</taxon>
    </lineage>
</organism>
<dbReference type="EMBL" id="L25086">
    <property type="protein sequence ID" value="AAA19705.1"/>
    <property type="molecule type" value="mRNA"/>
</dbReference>
<dbReference type="RefSeq" id="NP_001003325.1">
    <property type="nucleotide sequence ID" value="NM_001003325.1"/>
</dbReference>
<dbReference type="PDB" id="2WWB">
    <property type="method" value="EM"/>
    <property type="resolution" value="6.48 A"/>
    <property type="chains" value="B=1-68"/>
</dbReference>
<dbReference type="PDB" id="3JC2">
    <property type="method" value="EM"/>
    <property type="resolution" value="3.60 A"/>
    <property type="chains" value="2=7-68"/>
</dbReference>
<dbReference type="PDB" id="4CG5">
    <property type="method" value="EM"/>
    <property type="resolution" value="7.40 A"/>
    <property type="chains" value="B=1-68"/>
</dbReference>
<dbReference type="PDB" id="4CG6">
    <property type="method" value="EM"/>
    <property type="resolution" value="7.80 A"/>
    <property type="chains" value="B=1-68"/>
</dbReference>
<dbReference type="PDB" id="4CG7">
    <property type="method" value="EM"/>
    <property type="resolution" value="6.90 A"/>
    <property type="chains" value="B=1-68"/>
</dbReference>
<dbReference type="PDB" id="5A6U">
    <property type="method" value="EM"/>
    <property type="resolution" value="9.00 A"/>
    <property type="chains" value="G=7-68"/>
</dbReference>
<dbReference type="PDB" id="6FTG">
    <property type="method" value="EM"/>
    <property type="resolution" value="9.10 A"/>
    <property type="chains" value="y=7-68"/>
</dbReference>
<dbReference type="PDB" id="6FTI">
    <property type="method" value="EM"/>
    <property type="resolution" value="4.20 A"/>
    <property type="chains" value="y=7-68"/>
</dbReference>
<dbReference type="PDB" id="6FTJ">
    <property type="method" value="EM"/>
    <property type="resolution" value="4.70 A"/>
    <property type="chains" value="y=7-68"/>
</dbReference>
<dbReference type="PDB" id="6R7Q">
    <property type="method" value="EM"/>
    <property type="resolution" value="3.90 A"/>
    <property type="chains" value="YY=7-68"/>
</dbReference>
<dbReference type="PDB" id="6Z3T">
    <property type="method" value="EM"/>
    <property type="resolution" value="2.69 A"/>
    <property type="chains" value="B=1-68"/>
</dbReference>
<dbReference type="PDB" id="7TM3">
    <property type="method" value="EM"/>
    <property type="resolution" value="3.88 A"/>
    <property type="chains" value="3=1-68"/>
</dbReference>
<dbReference type="PDB" id="7TUT">
    <property type="method" value="EM"/>
    <property type="resolution" value="3.88 A"/>
    <property type="chains" value="3=1-68"/>
</dbReference>
<dbReference type="PDB" id="8BTK">
    <property type="method" value="EM"/>
    <property type="resolution" value="3.50 A"/>
    <property type="chains" value="SY=1-68"/>
</dbReference>
<dbReference type="PDB" id="8RJB">
    <property type="method" value="EM"/>
    <property type="resolution" value="2.69 A"/>
    <property type="chains" value="3=1-68"/>
</dbReference>
<dbReference type="PDB" id="8RJC">
    <property type="method" value="EM"/>
    <property type="resolution" value="2.90 A"/>
    <property type="chains" value="3=1-68"/>
</dbReference>
<dbReference type="PDB" id="8RJD">
    <property type="method" value="EM"/>
    <property type="resolution" value="2.79 A"/>
    <property type="chains" value="3=1-68"/>
</dbReference>
<dbReference type="PDBsum" id="2WWB"/>
<dbReference type="PDBsum" id="3JC2"/>
<dbReference type="PDBsum" id="4CG5"/>
<dbReference type="PDBsum" id="4CG6"/>
<dbReference type="PDBsum" id="4CG7"/>
<dbReference type="PDBsum" id="5A6U"/>
<dbReference type="PDBsum" id="6FTG"/>
<dbReference type="PDBsum" id="6FTI"/>
<dbReference type="PDBsum" id="6FTJ"/>
<dbReference type="PDBsum" id="6R7Q"/>
<dbReference type="PDBsum" id="6Z3T"/>
<dbReference type="PDBsum" id="7TM3"/>
<dbReference type="PDBsum" id="7TUT"/>
<dbReference type="PDBsum" id="8BTK"/>
<dbReference type="PDBsum" id="8RJB"/>
<dbReference type="PDBsum" id="8RJC"/>
<dbReference type="PDBsum" id="8RJD"/>
<dbReference type="EMDB" id="EMD-11064"/>
<dbReference type="EMDB" id="EMD-16232"/>
<dbReference type="EMDB" id="EMD-19195"/>
<dbReference type="EMDB" id="EMD-19197"/>
<dbReference type="EMDB" id="EMD-19198"/>
<dbReference type="EMDB" id="EMD-25994"/>
<dbReference type="EMDB" id="EMD-26133"/>
<dbReference type="EMDB" id="EMD-4315"/>
<dbReference type="EMDB" id="EMD-4316"/>
<dbReference type="EMDB" id="EMD-4317"/>
<dbReference type="EMDB" id="EMD-4745"/>
<dbReference type="SMR" id="P60058"/>
<dbReference type="CORUM" id="P60058"/>
<dbReference type="FunCoup" id="P60058">
    <property type="interactions" value="781"/>
</dbReference>
<dbReference type="STRING" id="9615.ENSCAFP00000005144"/>
<dbReference type="PaxDb" id="9612-ENSCAFP00000005144"/>
<dbReference type="Ensembl" id="ENSCAFT00000104631.1">
    <property type="protein sequence ID" value="ENSCAFP00000074802.1"/>
    <property type="gene ID" value="ENSCAFG00000057055.1"/>
</dbReference>
<dbReference type="Ensembl" id="ENSCAFT00030012384.1">
    <property type="protein sequence ID" value="ENSCAFP00030010835.1"/>
    <property type="gene ID" value="ENSCAFG00030006723.1"/>
</dbReference>
<dbReference type="Ensembl" id="ENSCAFT00040013857.1">
    <property type="protein sequence ID" value="ENSCAFP00040012002.1"/>
    <property type="gene ID" value="ENSCAFG00040007446.1"/>
</dbReference>
<dbReference type="Ensembl" id="ENSCAFT00845020063.1">
    <property type="protein sequence ID" value="ENSCAFP00845015721.1"/>
    <property type="gene ID" value="ENSCAFG00845011317.1"/>
</dbReference>
<dbReference type="GeneID" id="404017"/>
<dbReference type="KEGG" id="cfa:404017"/>
<dbReference type="CTD" id="23480"/>
<dbReference type="VEuPathDB" id="HostDB:ENSCAFG00845011317"/>
<dbReference type="eggNOG" id="KOG3498">
    <property type="taxonomic scope" value="Eukaryota"/>
</dbReference>
<dbReference type="GeneTree" id="ENSGT00390000001319"/>
<dbReference type="HOGENOM" id="CLU_167752_2_0_1"/>
<dbReference type="InParanoid" id="P60058"/>
<dbReference type="OMA" id="KPDQKEY"/>
<dbReference type="OrthoDB" id="2401875at2759"/>
<dbReference type="TreeFam" id="TF300232"/>
<dbReference type="Reactome" id="R-CFA-9609523">
    <property type="pathway name" value="Insertion of tail-anchored proteins into the endoplasmic reticulum membrane"/>
</dbReference>
<dbReference type="EvolutionaryTrace" id="P60058"/>
<dbReference type="Proteomes" id="UP000002254">
    <property type="component" value="Chromosome 18"/>
</dbReference>
<dbReference type="Proteomes" id="UP000694429">
    <property type="component" value="Chromosome 18"/>
</dbReference>
<dbReference type="Proteomes" id="UP000694542">
    <property type="component" value="Chromosome 18"/>
</dbReference>
<dbReference type="Proteomes" id="UP000805418">
    <property type="component" value="Chromosome 18"/>
</dbReference>
<dbReference type="Bgee" id="ENSCAFG00000003459">
    <property type="expression patterns" value="Expressed in saliva-secreting gland and 48 other cell types or tissues"/>
</dbReference>
<dbReference type="GO" id="GO:0005789">
    <property type="term" value="C:endoplasmic reticulum membrane"/>
    <property type="evidence" value="ECO:0000304"/>
    <property type="project" value="Reactome"/>
</dbReference>
<dbReference type="GO" id="GO:0071261">
    <property type="term" value="C:Ssh1 translocon complex"/>
    <property type="evidence" value="ECO:0000318"/>
    <property type="project" value="GO_Central"/>
</dbReference>
<dbReference type="GO" id="GO:0005543">
    <property type="term" value="F:phospholipid binding"/>
    <property type="evidence" value="ECO:0000315"/>
    <property type="project" value="CAFA"/>
</dbReference>
<dbReference type="GO" id="GO:0008320">
    <property type="term" value="F:protein transmembrane transporter activity"/>
    <property type="evidence" value="ECO:0000316"/>
    <property type="project" value="UniProtKB"/>
</dbReference>
<dbReference type="GO" id="GO:0043022">
    <property type="term" value="F:ribosome binding"/>
    <property type="evidence" value="ECO:0000250"/>
    <property type="project" value="UniProtKB"/>
</dbReference>
<dbReference type="GO" id="GO:0022406">
    <property type="term" value="P:membrane docking"/>
    <property type="evidence" value="ECO:0000315"/>
    <property type="project" value="CAFA"/>
</dbReference>
<dbReference type="GO" id="GO:0031204">
    <property type="term" value="P:post-translational protein targeting to membrane, translocation"/>
    <property type="evidence" value="ECO:0000318"/>
    <property type="project" value="GO_Central"/>
</dbReference>
<dbReference type="GO" id="GO:0045047">
    <property type="term" value="P:protein targeting to ER"/>
    <property type="evidence" value="ECO:0000316"/>
    <property type="project" value="UniProtKB"/>
</dbReference>
<dbReference type="FunFam" id="1.20.5.820:FF:000001">
    <property type="entry name" value="Transport protein Sec61 subunit gamma"/>
    <property type="match status" value="1"/>
</dbReference>
<dbReference type="Gene3D" id="1.20.5.820">
    <property type="entry name" value="Preprotein translocase SecE subunit"/>
    <property type="match status" value="1"/>
</dbReference>
<dbReference type="HAMAP" id="MF_00422">
    <property type="entry name" value="SecE"/>
    <property type="match status" value="1"/>
</dbReference>
<dbReference type="InterPro" id="IPR023391">
    <property type="entry name" value="Prot_translocase_SecE_dom_sf"/>
</dbReference>
<dbReference type="InterPro" id="IPR008158">
    <property type="entry name" value="Translocase_Sec61-g"/>
</dbReference>
<dbReference type="InterPro" id="IPR001901">
    <property type="entry name" value="Translocase_SecE/Sec61-g"/>
</dbReference>
<dbReference type="NCBIfam" id="TIGR00327">
    <property type="entry name" value="secE_euk_arch"/>
    <property type="match status" value="1"/>
</dbReference>
<dbReference type="PANTHER" id="PTHR12309">
    <property type="entry name" value="SEC61 GAMMA SUBUNIT"/>
    <property type="match status" value="1"/>
</dbReference>
<dbReference type="Pfam" id="PF00584">
    <property type="entry name" value="SecE"/>
    <property type="match status" value="1"/>
</dbReference>
<dbReference type="SUPFAM" id="SSF103456">
    <property type="entry name" value="Preprotein translocase SecE subunit"/>
    <property type="match status" value="1"/>
</dbReference>
<dbReference type="PROSITE" id="PS01067">
    <property type="entry name" value="SECE_SEC61G"/>
    <property type="match status" value="1"/>
</dbReference>
<gene>
    <name type="primary">SEC61G</name>
</gene>
<reference key="1">
    <citation type="journal article" date="1994" name="Nature">
        <title>Evolutionary conservation of components of the protein translocation complex.</title>
        <authorList>
            <person name="Hartmann E."/>
            <person name="Sommer T."/>
            <person name="Prehn S."/>
            <person name="Goerlich D."/>
            <person name="Jentsch S."/>
            <person name="Rapoport T.A."/>
        </authorList>
    </citation>
    <scope>NUCLEOTIDE SEQUENCE [MRNA]</scope>
    <scope>PARTIAL PROTEIN SEQUENCE</scope>
    <scope>SUBUNIT</scope>
    <scope>FUNCTION</scope>
    <scope>SUBCELLULAR LOCATION</scope>
    <source>
        <strain>Cocker spaniel</strain>
        <tissue>Kidney</tissue>
    </source>
</reference>
<reference key="2">
    <citation type="journal article" date="2022" name="Nature">
        <title>Mechanism of an intramembrane chaperone for multipass membrane proteins.</title>
        <authorList>
            <person name="Smalinskaite L."/>
            <person name="Kim M.K."/>
            <person name="Lewis A.J.O."/>
            <person name="Keenan R.J."/>
            <person name="Hegde R.S."/>
        </authorList>
    </citation>
    <scope>STRUCTURE BY ELECTRON MICROSCOPY (3.88 ANGSTROMS) IN COMPLEX WITH THE MULTI-PASS TRANSLOCON COMPLEX</scope>
    <scope>FUNCTION</scope>
    <scope>SUBCELLULAR LOCATION</scope>
    <scope>INTERACTION WITH THE MULTI-PASS TRANSLOCON COMPLEX</scope>
</reference>
<feature type="chain" id="PRO_0000104194" description="Protein transport protein Sec61 subunit gamma">
    <location>
        <begin position="1"/>
        <end position="68"/>
    </location>
</feature>
<feature type="topological domain" description="Cytoplasmic" evidence="3 6 7">
    <location>
        <begin position="1"/>
        <end position="35"/>
    </location>
</feature>
<feature type="transmembrane region" description="Helical" evidence="3 6 7">
    <location>
        <begin position="36"/>
        <end position="61"/>
    </location>
</feature>
<feature type="topological domain" description="Extracellular" evidence="3 6 7">
    <location>
        <begin position="62"/>
        <end position="68"/>
    </location>
</feature>
<feature type="modified residue" description="N-acetylmethionine" evidence="1">
    <location>
        <position position="1"/>
    </location>
</feature>
<feature type="modified residue" description="Phosphoserine" evidence="1">
    <location>
        <position position="18"/>
    </location>
</feature>
<feature type="helix" evidence="8">
    <location>
        <begin position="9"/>
        <end position="22"/>
    </location>
</feature>
<feature type="helix" evidence="8">
    <location>
        <begin position="32"/>
        <end position="64"/>
    </location>
</feature>
<keyword id="KW-0002">3D-structure</keyword>
<keyword id="KW-0007">Acetylation</keyword>
<keyword id="KW-0903">Direct protein sequencing</keyword>
<keyword id="KW-0256">Endoplasmic reticulum</keyword>
<keyword id="KW-0472">Membrane</keyword>
<keyword id="KW-0597">Phosphoprotein</keyword>
<keyword id="KW-0653">Protein transport</keyword>
<keyword id="KW-1185">Reference proteome</keyword>
<keyword id="KW-0811">Translocation</keyword>
<keyword id="KW-0812">Transmembrane</keyword>
<keyword id="KW-1133">Transmembrane helix</keyword>
<keyword id="KW-0813">Transport</keyword>
<accession>P60058</accession>
<accession>P38384</accession>
<proteinExistence type="evidence at protein level"/>